<protein>
    <recommendedName>
        <fullName evidence="1">Succinate--CoA ligase [ADP-forming] subunit beta</fullName>
        <ecNumber evidence="1">6.2.1.5</ecNumber>
    </recommendedName>
    <alternativeName>
        <fullName evidence="1">Succinyl-CoA synthetase subunit beta</fullName>
        <shortName evidence="1">SCS-beta</shortName>
    </alternativeName>
</protein>
<reference key="1">
    <citation type="submission" date="2007-10" db="EMBL/GenBank/DDBJ databases">
        <title>Complete sequence of Shewanella pealeana ATCC 700345.</title>
        <authorList>
            <consortium name="US DOE Joint Genome Institute"/>
            <person name="Copeland A."/>
            <person name="Lucas S."/>
            <person name="Lapidus A."/>
            <person name="Barry K."/>
            <person name="Glavina del Rio T."/>
            <person name="Dalin E."/>
            <person name="Tice H."/>
            <person name="Pitluck S."/>
            <person name="Chertkov O."/>
            <person name="Brettin T."/>
            <person name="Bruce D."/>
            <person name="Detter J.C."/>
            <person name="Han C."/>
            <person name="Schmutz J."/>
            <person name="Larimer F."/>
            <person name="Land M."/>
            <person name="Hauser L."/>
            <person name="Kyrpides N."/>
            <person name="Kim E."/>
            <person name="Zhao J.-S.Z."/>
            <person name="Manno D."/>
            <person name="Hawari J."/>
            <person name="Richardson P."/>
        </authorList>
    </citation>
    <scope>NUCLEOTIDE SEQUENCE [LARGE SCALE GENOMIC DNA]</scope>
    <source>
        <strain>ATCC 700345 / ANG-SQ1</strain>
    </source>
</reference>
<name>SUCC_SHEPA</name>
<evidence type="ECO:0000255" key="1">
    <source>
        <dbReference type="HAMAP-Rule" id="MF_00558"/>
    </source>
</evidence>
<comment type="function">
    <text evidence="1">Succinyl-CoA synthetase functions in the citric acid cycle (TCA), coupling the hydrolysis of succinyl-CoA to the synthesis of either ATP or GTP and thus represents the only step of substrate-level phosphorylation in the TCA. The beta subunit provides nucleotide specificity of the enzyme and binds the substrate succinate, while the binding sites for coenzyme A and phosphate are found in the alpha subunit.</text>
</comment>
<comment type="catalytic activity">
    <reaction evidence="1">
        <text>succinate + ATP + CoA = succinyl-CoA + ADP + phosphate</text>
        <dbReference type="Rhea" id="RHEA:17661"/>
        <dbReference type="ChEBI" id="CHEBI:30031"/>
        <dbReference type="ChEBI" id="CHEBI:30616"/>
        <dbReference type="ChEBI" id="CHEBI:43474"/>
        <dbReference type="ChEBI" id="CHEBI:57287"/>
        <dbReference type="ChEBI" id="CHEBI:57292"/>
        <dbReference type="ChEBI" id="CHEBI:456216"/>
        <dbReference type="EC" id="6.2.1.5"/>
    </reaction>
    <physiologicalReaction direction="right-to-left" evidence="1">
        <dbReference type="Rhea" id="RHEA:17663"/>
    </physiologicalReaction>
</comment>
<comment type="catalytic activity">
    <reaction evidence="1">
        <text>GTP + succinate + CoA = succinyl-CoA + GDP + phosphate</text>
        <dbReference type="Rhea" id="RHEA:22120"/>
        <dbReference type="ChEBI" id="CHEBI:30031"/>
        <dbReference type="ChEBI" id="CHEBI:37565"/>
        <dbReference type="ChEBI" id="CHEBI:43474"/>
        <dbReference type="ChEBI" id="CHEBI:57287"/>
        <dbReference type="ChEBI" id="CHEBI:57292"/>
        <dbReference type="ChEBI" id="CHEBI:58189"/>
    </reaction>
    <physiologicalReaction direction="right-to-left" evidence="1">
        <dbReference type="Rhea" id="RHEA:22122"/>
    </physiologicalReaction>
</comment>
<comment type="cofactor">
    <cofactor evidence="1">
        <name>Mg(2+)</name>
        <dbReference type="ChEBI" id="CHEBI:18420"/>
    </cofactor>
    <text evidence="1">Binds 1 Mg(2+) ion per subunit.</text>
</comment>
<comment type="pathway">
    <text evidence="1">Carbohydrate metabolism; tricarboxylic acid cycle; succinate from succinyl-CoA (ligase route): step 1/1.</text>
</comment>
<comment type="subunit">
    <text evidence="1">Heterotetramer of two alpha and two beta subunits.</text>
</comment>
<comment type="similarity">
    <text evidence="1">Belongs to the succinate/malate CoA ligase beta subunit family.</text>
</comment>
<keyword id="KW-0067">ATP-binding</keyword>
<keyword id="KW-0436">Ligase</keyword>
<keyword id="KW-0460">Magnesium</keyword>
<keyword id="KW-0479">Metal-binding</keyword>
<keyword id="KW-0547">Nucleotide-binding</keyword>
<keyword id="KW-1185">Reference proteome</keyword>
<keyword id="KW-0816">Tricarboxylic acid cycle</keyword>
<sequence>MNLHEYQAKALFAEYGLPVSEGFACDTAQEAVEAAGHIGGDMWVVKCQVHAGGRGKAGGVKVTGDKEEIRAFAEHWLGKNLVTYQTDEKGQPVAKILVESCTDIANELYLGAVVDRSTRRVVFMASTEGGVEIETVAEETPELIHKAIIDPLTGPQPYQARDLGFKLGLNPTQMKQFTKVFMGLAKMFEDHDFALLEINPLVITDEGNIHCLDGKIGIDGNALFRQPKIRDMHDPSQDDAREAHAAKFELNYVALDGNVGCMVNGAGLAMGTMDIVNLHGGKPANFLDVGGGATKERVAEAFKIILSDSNVKAVLVNIFGGIVRCDMIAEGIIGAVKEVGVEVPVVVRLEGTNADLGREVLANSDLDIIAATSLTDAAEQVVKAAEGK</sequence>
<feature type="chain" id="PRO_1000082225" description="Succinate--CoA ligase [ADP-forming] subunit beta">
    <location>
        <begin position="1"/>
        <end position="388"/>
    </location>
</feature>
<feature type="domain" description="ATP-grasp" evidence="1">
    <location>
        <begin position="9"/>
        <end position="244"/>
    </location>
</feature>
<feature type="binding site" evidence="1">
    <location>
        <position position="46"/>
    </location>
    <ligand>
        <name>ATP</name>
        <dbReference type="ChEBI" id="CHEBI:30616"/>
    </ligand>
</feature>
<feature type="binding site" evidence="1">
    <location>
        <begin position="53"/>
        <end position="55"/>
    </location>
    <ligand>
        <name>ATP</name>
        <dbReference type="ChEBI" id="CHEBI:30616"/>
    </ligand>
</feature>
<feature type="binding site" evidence="1">
    <location>
        <position position="99"/>
    </location>
    <ligand>
        <name>ATP</name>
        <dbReference type="ChEBI" id="CHEBI:30616"/>
    </ligand>
</feature>
<feature type="binding site" evidence="1">
    <location>
        <position position="102"/>
    </location>
    <ligand>
        <name>ATP</name>
        <dbReference type="ChEBI" id="CHEBI:30616"/>
    </ligand>
</feature>
<feature type="binding site" evidence="1">
    <location>
        <position position="107"/>
    </location>
    <ligand>
        <name>ATP</name>
        <dbReference type="ChEBI" id="CHEBI:30616"/>
    </ligand>
</feature>
<feature type="binding site" evidence="1">
    <location>
        <position position="199"/>
    </location>
    <ligand>
        <name>Mg(2+)</name>
        <dbReference type="ChEBI" id="CHEBI:18420"/>
    </ligand>
</feature>
<feature type="binding site" evidence="1">
    <location>
        <position position="213"/>
    </location>
    <ligand>
        <name>Mg(2+)</name>
        <dbReference type="ChEBI" id="CHEBI:18420"/>
    </ligand>
</feature>
<feature type="binding site" evidence="1">
    <location>
        <position position="264"/>
    </location>
    <ligand>
        <name>substrate</name>
        <note>ligand shared with subunit alpha</note>
    </ligand>
</feature>
<feature type="binding site" evidence="1">
    <location>
        <begin position="321"/>
        <end position="323"/>
    </location>
    <ligand>
        <name>substrate</name>
        <note>ligand shared with subunit alpha</note>
    </ligand>
</feature>
<accession>A8H3H6</accession>
<proteinExistence type="inferred from homology"/>
<gene>
    <name evidence="1" type="primary">sucC</name>
    <name type="ordered locus">Spea_1790</name>
</gene>
<organism>
    <name type="scientific">Shewanella pealeana (strain ATCC 700345 / ANG-SQ1)</name>
    <dbReference type="NCBI Taxonomy" id="398579"/>
    <lineage>
        <taxon>Bacteria</taxon>
        <taxon>Pseudomonadati</taxon>
        <taxon>Pseudomonadota</taxon>
        <taxon>Gammaproteobacteria</taxon>
        <taxon>Alteromonadales</taxon>
        <taxon>Shewanellaceae</taxon>
        <taxon>Shewanella</taxon>
    </lineage>
</organism>
<dbReference type="EC" id="6.2.1.5" evidence="1"/>
<dbReference type="EMBL" id="CP000851">
    <property type="protein sequence ID" value="ABV87113.1"/>
    <property type="molecule type" value="Genomic_DNA"/>
</dbReference>
<dbReference type="RefSeq" id="WP_012155033.1">
    <property type="nucleotide sequence ID" value="NC_009901.1"/>
</dbReference>
<dbReference type="SMR" id="A8H3H6"/>
<dbReference type="STRING" id="398579.Spea_1790"/>
<dbReference type="KEGG" id="spl:Spea_1790"/>
<dbReference type="eggNOG" id="COG0045">
    <property type="taxonomic scope" value="Bacteria"/>
</dbReference>
<dbReference type="HOGENOM" id="CLU_037430_0_2_6"/>
<dbReference type="OrthoDB" id="9802602at2"/>
<dbReference type="UniPathway" id="UPA00223">
    <property type="reaction ID" value="UER00999"/>
</dbReference>
<dbReference type="Proteomes" id="UP000002608">
    <property type="component" value="Chromosome"/>
</dbReference>
<dbReference type="GO" id="GO:0005829">
    <property type="term" value="C:cytosol"/>
    <property type="evidence" value="ECO:0007669"/>
    <property type="project" value="TreeGrafter"/>
</dbReference>
<dbReference type="GO" id="GO:0042709">
    <property type="term" value="C:succinate-CoA ligase complex"/>
    <property type="evidence" value="ECO:0007669"/>
    <property type="project" value="TreeGrafter"/>
</dbReference>
<dbReference type="GO" id="GO:0005524">
    <property type="term" value="F:ATP binding"/>
    <property type="evidence" value="ECO:0007669"/>
    <property type="project" value="UniProtKB-UniRule"/>
</dbReference>
<dbReference type="GO" id="GO:0000287">
    <property type="term" value="F:magnesium ion binding"/>
    <property type="evidence" value="ECO:0007669"/>
    <property type="project" value="UniProtKB-UniRule"/>
</dbReference>
<dbReference type="GO" id="GO:0004775">
    <property type="term" value="F:succinate-CoA ligase (ADP-forming) activity"/>
    <property type="evidence" value="ECO:0007669"/>
    <property type="project" value="UniProtKB-UniRule"/>
</dbReference>
<dbReference type="GO" id="GO:0004776">
    <property type="term" value="F:succinate-CoA ligase (GDP-forming) activity"/>
    <property type="evidence" value="ECO:0007669"/>
    <property type="project" value="RHEA"/>
</dbReference>
<dbReference type="GO" id="GO:0006104">
    <property type="term" value="P:succinyl-CoA metabolic process"/>
    <property type="evidence" value="ECO:0007669"/>
    <property type="project" value="TreeGrafter"/>
</dbReference>
<dbReference type="GO" id="GO:0006099">
    <property type="term" value="P:tricarboxylic acid cycle"/>
    <property type="evidence" value="ECO:0007669"/>
    <property type="project" value="UniProtKB-UniRule"/>
</dbReference>
<dbReference type="FunFam" id="3.30.1490.20:FF:000002">
    <property type="entry name" value="Succinate--CoA ligase [ADP-forming] subunit beta"/>
    <property type="match status" value="1"/>
</dbReference>
<dbReference type="FunFam" id="3.30.470.20:FF:000002">
    <property type="entry name" value="Succinate--CoA ligase [ADP-forming] subunit beta"/>
    <property type="match status" value="1"/>
</dbReference>
<dbReference type="FunFam" id="3.40.50.261:FF:000001">
    <property type="entry name" value="Succinate--CoA ligase [ADP-forming] subunit beta"/>
    <property type="match status" value="1"/>
</dbReference>
<dbReference type="Gene3D" id="3.30.1490.20">
    <property type="entry name" value="ATP-grasp fold, A domain"/>
    <property type="match status" value="1"/>
</dbReference>
<dbReference type="Gene3D" id="3.30.470.20">
    <property type="entry name" value="ATP-grasp fold, B domain"/>
    <property type="match status" value="1"/>
</dbReference>
<dbReference type="Gene3D" id="3.40.50.261">
    <property type="entry name" value="Succinyl-CoA synthetase domains"/>
    <property type="match status" value="1"/>
</dbReference>
<dbReference type="HAMAP" id="MF_00558">
    <property type="entry name" value="Succ_CoA_beta"/>
    <property type="match status" value="1"/>
</dbReference>
<dbReference type="InterPro" id="IPR011761">
    <property type="entry name" value="ATP-grasp"/>
</dbReference>
<dbReference type="InterPro" id="IPR013650">
    <property type="entry name" value="ATP-grasp_succ-CoA_synth-type"/>
</dbReference>
<dbReference type="InterPro" id="IPR013815">
    <property type="entry name" value="ATP_grasp_subdomain_1"/>
</dbReference>
<dbReference type="InterPro" id="IPR017866">
    <property type="entry name" value="Succ-CoA_synthase_bsu_CS"/>
</dbReference>
<dbReference type="InterPro" id="IPR005811">
    <property type="entry name" value="SUCC_ACL_C"/>
</dbReference>
<dbReference type="InterPro" id="IPR005809">
    <property type="entry name" value="Succ_CoA_ligase-like_bsu"/>
</dbReference>
<dbReference type="InterPro" id="IPR016102">
    <property type="entry name" value="Succinyl-CoA_synth-like"/>
</dbReference>
<dbReference type="NCBIfam" id="NF001913">
    <property type="entry name" value="PRK00696.1"/>
    <property type="match status" value="1"/>
</dbReference>
<dbReference type="NCBIfam" id="TIGR01016">
    <property type="entry name" value="sucCoAbeta"/>
    <property type="match status" value="1"/>
</dbReference>
<dbReference type="PANTHER" id="PTHR11815:SF10">
    <property type="entry name" value="SUCCINATE--COA LIGASE [GDP-FORMING] SUBUNIT BETA, MITOCHONDRIAL"/>
    <property type="match status" value="1"/>
</dbReference>
<dbReference type="PANTHER" id="PTHR11815">
    <property type="entry name" value="SUCCINYL-COA SYNTHETASE BETA CHAIN"/>
    <property type="match status" value="1"/>
</dbReference>
<dbReference type="Pfam" id="PF08442">
    <property type="entry name" value="ATP-grasp_2"/>
    <property type="match status" value="1"/>
</dbReference>
<dbReference type="Pfam" id="PF00549">
    <property type="entry name" value="Ligase_CoA"/>
    <property type="match status" value="1"/>
</dbReference>
<dbReference type="PIRSF" id="PIRSF001554">
    <property type="entry name" value="SucCS_beta"/>
    <property type="match status" value="1"/>
</dbReference>
<dbReference type="SUPFAM" id="SSF56059">
    <property type="entry name" value="Glutathione synthetase ATP-binding domain-like"/>
    <property type="match status" value="1"/>
</dbReference>
<dbReference type="SUPFAM" id="SSF52210">
    <property type="entry name" value="Succinyl-CoA synthetase domains"/>
    <property type="match status" value="1"/>
</dbReference>
<dbReference type="PROSITE" id="PS50975">
    <property type="entry name" value="ATP_GRASP"/>
    <property type="match status" value="1"/>
</dbReference>
<dbReference type="PROSITE" id="PS01217">
    <property type="entry name" value="SUCCINYL_COA_LIG_3"/>
    <property type="match status" value="1"/>
</dbReference>